<accession>B2IEZ6</accession>
<reference key="1">
    <citation type="journal article" date="2010" name="J. Bacteriol.">
        <title>Complete genome sequence of Beijerinckia indica subsp. indica.</title>
        <authorList>
            <person name="Tamas I."/>
            <person name="Dedysh S.N."/>
            <person name="Liesack W."/>
            <person name="Stott M.B."/>
            <person name="Alam M."/>
            <person name="Murrell J.C."/>
            <person name="Dunfield P.F."/>
        </authorList>
    </citation>
    <scope>NUCLEOTIDE SEQUENCE [LARGE SCALE GENOMIC DNA]</scope>
    <source>
        <strain>ATCC 9039 / DSM 1715 / NCIMB 8712</strain>
    </source>
</reference>
<feature type="chain" id="PRO_0000381237" description="Biotin synthase">
    <location>
        <begin position="1"/>
        <end position="320"/>
    </location>
</feature>
<feature type="domain" description="Radical SAM core" evidence="2">
    <location>
        <begin position="45"/>
        <end position="274"/>
    </location>
</feature>
<feature type="binding site" evidence="1">
    <location>
        <position position="60"/>
    </location>
    <ligand>
        <name>[4Fe-4S] cluster</name>
        <dbReference type="ChEBI" id="CHEBI:49883"/>
        <note>4Fe-4S-S-AdoMet</note>
    </ligand>
</feature>
<feature type="binding site" evidence="1">
    <location>
        <position position="64"/>
    </location>
    <ligand>
        <name>[4Fe-4S] cluster</name>
        <dbReference type="ChEBI" id="CHEBI:49883"/>
        <note>4Fe-4S-S-AdoMet</note>
    </ligand>
</feature>
<feature type="binding site" evidence="1">
    <location>
        <position position="67"/>
    </location>
    <ligand>
        <name>[4Fe-4S] cluster</name>
        <dbReference type="ChEBI" id="CHEBI:49883"/>
        <note>4Fe-4S-S-AdoMet</note>
    </ligand>
</feature>
<feature type="binding site" evidence="1">
    <location>
        <position position="105"/>
    </location>
    <ligand>
        <name>[2Fe-2S] cluster</name>
        <dbReference type="ChEBI" id="CHEBI:190135"/>
    </ligand>
</feature>
<feature type="binding site" evidence="1">
    <location>
        <position position="137"/>
    </location>
    <ligand>
        <name>[2Fe-2S] cluster</name>
        <dbReference type="ChEBI" id="CHEBI:190135"/>
    </ligand>
</feature>
<feature type="binding site" evidence="1">
    <location>
        <position position="197"/>
    </location>
    <ligand>
        <name>[2Fe-2S] cluster</name>
        <dbReference type="ChEBI" id="CHEBI:190135"/>
    </ligand>
</feature>
<feature type="binding site" evidence="1">
    <location>
        <position position="269"/>
    </location>
    <ligand>
        <name>[2Fe-2S] cluster</name>
        <dbReference type="ChEBI" id="CHEBI:190135"/>
    </ligand>
</feature>
<dbReference type="EC" id="2.8.1.6" evidence="1"/>
<dbReference type="EMBL" id="CP001016">
    <property type="protein sequence ID" value="ACB94187.1"/>
    <property type="molecule type" value="Genomic_DNA"/>
</dbReference>
<dbReference type="RefSeq" id="WP_012383545.1">
    <property type="nucleotide sequence ID" value="NC_010581.1"/>
</dbReference>
<dbReference type="SMR" id="B2IEZ6"/>
<dbReference type="STRING" id="395963.Bind_0535"/>
<dbReference type="KEGG" id="bid:Bind_0535"/>
<dbReference type="eggNOG" id="COG0502">
    <property type="taxonomic scope" value="Bacteria"/>
</dbReference>
<dbReference type="HOGENOM" id="CLU_033172_1_2_5"/>
<dbReference type="OrthoDB" id="9786826at2"/>
<dbReference type="UniPathway" id="UPA00078">
    <property type="reaction ID" value="UER00162"/>
</dbReference>
<dbReference type="Proteomes" id="UP000001695">
    <property type="component" value="Chromosome"/>
</dbReference>
<dbReference type="GO" id="GO:0051537">
    <property type="term" value="F:2 iron, 2 sulfur cluster binding"/>
    <property type="evidence" value="ECO:0007669"/>
    <property type="project" value="UniProtKB-KW"/>
</dbReference>
<dbReference type="GO" id="GO:0051539">
    <property type="term" value="F:4 iron, 4 sulfur cluster binding"/>
    <property type="evidence" value="ECO:0007669"/>
    <property type="project" value="UniProtKB-KW"/>
</dbReference>
<dbReference type="GO" id="GO:0004076">
    <property type="term" value="F:biotin synthase activity"/>
    <property type="evidence" value="ECO:0007669"/>
    <property type="project" value="UniProtKB-UniRule"/>
</dbReference>
<dbReference type="GO" id="GO:0005506">
    <property type="term" value="F:iron ion binding"/>
    <property type="evidence" value="ECO:0007669"/>
    <property type="project" value="UniProtKB-UniRule"/>
</dbReference>
<dbReference type="GO" id="GO:0009102">
    <property type="term" value="P:biotin biosynthetic process"/>
    <property type="evidence" value="ECO:0007669"/>
    <property type="project" value="UniProtKB-UniRule"/>
</dbReference>
<dbReference type="CDD" id="cd01335">
    <property type="entry name" value="Radical_SAM"/>
    <property type="match status" value="1"/>
</dbReference>
<dbReference type="Gene3D" id="3.20.20.70">
    <property type="entry name" value="Aldolase class I"/>
    <property type="match status" value="1"/>
</dbReference>
<dbReference type="HAMAP" id="MF_01694">
    <property type="entry name" value="BioB"/>
    <property type="match status" value="1"/>
</dbReference>
<dbReference type="InterPro" id="IPR013785">
    <property type="entry name" value="Aldolase_TIM"/>
</dbReference>
<dbReference type="InterPro" id="IPR010722">
    <property type="entry name" value="BATS_dom"/>
</dbReference>
<dbReference type="InterPro" id="IPR002684">
    <property type="entry name" value="Biotin_synth/BioAB"/>
</dbReference>
<dbReference type="InterPro" id="IPR024177">
    <property type="entry name" value="Biotin_synthase"/>
</dbReference>
<dbReference type="InterPro" id="IPR006638">
    <property type="entry name" value="Elp3/MiaA/NifB-like_rSAM"/>
</dbReference>
<dbReference type="InterPro" id="IPR007197">
    <property type="entry name" value="rSAM"/>
</dbReference>
<dbReference type="NCBIfam" id="TIGR00433">
    <property type="entry name" value="bioB"/>
    <property type="match status" value="1"/>
</dbReference>
<dbReference type="PANTHER" id="PTHR22976">
    <property type="entry name" value="BIOTIN SYNTHASE"/>
    <property type="match status" value="1"/>
</dbReference>
<dbReference type="PANTHER" id="PTHR22976:SF2">
    <property type="entry name" value="BIOTIN SYNTHASE, MITOCHONDRIAL"/>
    <property type="match status" value="1"/>
</dbReference>
<dbReference type="Pfam" id="PF06968">
    <property type="entry name" value="BATS"/>
    <property type="match status" value="1"/>
</dbReference>
<dbReference type="Pfam" id="PF04055">
    <property type="entry name" value="Radical_SAM"/>
    <property type="match status" value="1"/>
</dbReference>
<dbReference type="PIRSF" id="PIRSF001619">
    <property type="entry name" value="Biotin_synth"/>
    <property type="match status" value="1"/>
</dbReference>
<dbReference type="SFLD" id="SFLDF00272">
    <property type="entry name" value="biotin_synthase"/>
    <property type="match status" value="1"/>
</dbReference>
<dbReference type="SFLD" id="SFLDG01278">
    <property type="entry name" value="biotin_synthase_like"/>
    <property type="match status" value="1"/>
</dbReference>
<dbReference type="SMART" id="SM00876">
    <property type="entry name" value="BATS"/>
    <property type="match status" value="1"/>
</dbReference>
<dbReference type="SMART" id="SM00729">
    <property type="entry name" value="Elp3"/>
    <property type="match status" value="1"/>
</dbReference>
<dbReference type="SUPFAM" id="SSF102114">
    <property type="entry name" value="Radical SAM enzymes"/>
    <property type="match status" value="1"/>
</dbReference>
<dbReference type="PROSITE" id="PS51918">
    <property type="entry name" value="RADICAL_SAM"/>
    <property type="match status" value="1"/>
</dbReference>
<protein>
    <recommendedName>
        <fullName evidence="1">Biotin synthase</fullName>
        <ecNumber evidence="1">2.8.1.6</ecNumber>
    </recommendedName>
</protein>
<comment type="function">
    <text evidence="1">Catalyzes the conversion of dethiobiotin (DTB) to biotin by the insertion of a sulfur atom into dethiobiotin via a radical-based mechanism.</text>
</comment>
<comment type="catalytic activity">
    <reaction evidence="1">
        <text>(4R,5S)-dethiobiotin + (sulfur carrier)-SH + 2 reduced [2Fe-2S]-[ferredoxin] + 2 S-adenosyl-L-methionine = (sulfur carrier)-H + biotin + 2 5'-deoxyadenosine + 2 L-methionine + 2 oxidized [2Fe-2S]-[ferredoxin]</text>
        <dbReference type="Rhea" id="RHEA:22060"/>
        <dbReference type="Rhea" id="RHEA-COMP:10000"/>
        <dbReference type="Rhea" id="RHEA-COMP:10001"/>
        <dbReference type="Rhea" id="RHEA-COMP:14737"/>
        <dbReference type="Rhea" id="RHEA-COMP:14739"/>
        <dbReference type="ChEBI" id="CHEBI:17319"/>
        <dbReference type="ChEBI" id="CHEBI:29917"/>
        <dbReference type="ChEBI" id="CHEBI:33737"/>
        <dbReference type="ChEBI" id="CHEBI:33738"/>
        <dbReference type="ChEBI" id="CHEBI:57586"/>
        <dbReference type="ChEBI" id="CHEBI:57844"/>
        <dbReference type="ChEBI" id="CHEBI:59789"/>
        <dbReference type="ChEBI" id="CHEBI:64428"/>
        <dbReference type="ChEBI" id="CHEBI:149473"/>
        <dbReference type="EC" id="2.8.1.6"/>
    </reaction>
</comment>
<comment type="cofactor">
    <cofactor evidence="1">
        <name>[4Fe-4S] cluster</name>
        <dbReference type="ChEBI" id="CHEBI:49883"/>
    </cofactor>
    <text evidence="1">Binds 1 [4Fe-4S] cluster. The cluster is coordinated with 3 cysteines and an exchangeable S-adenosyl-L-methionine.</text>
</comment>
<comment type="cofactor">
    <cofactor evidence="1">
        <name>[2Fe-2S] cluster</name>
        <dbReference type="ChEBI" id="CHEBI:190135"/>
    </cofactor>
    <text evidence="1">Binds 1 [2Fe-2S] cluster. The cluster is coordinated with 3 cysteines and 1 arginine.</text>
</comment>
<comment type="pathway">
    <text evidence="1">Cofactor biosynthesis; biotin biosynthesis; biotin from 7,8-diaminononanoate: step 2/2.</text>
</comment>
<comment type="subunit">
    <text evidence="1">Homodimer.</text>
</comment>
<comment type="similarity">
    <text evidence="1">Belongs to the radical SAM superfamily. Biotin synthase family.</text>
</comment>
<name>BIOB_BEII9</name>
<keyword id="KW-0001">2Fe-2S</keyword>
<keyword id="KW-0004">4Fe-4S</keyword>
<keyword id="KW-0093">Biotin biosynthesis</keyword>
<keyword id="KW-0408">Iron</keyword>
<keyword id="KW-0411">Iron-sulfur</keyword>
<keyword id="KW-0479">Metal-binding</keyword>
<keyword id="KW-1185">Reference proteome</keyword>
<keyword id="KW-0949">S-adenosyl-L-methionine</keyword>
<keyword id="KW-0808">Transferase</keyword>
<evidence type="ECO:0000255" key="1">
    <source>
        <dbReference type="HAMAP-Rule" id="MF_01694"/>
    </source>
</evidence>
<evidence type="ECO:0000255" key="2">
    <source>
        <dbReference type="PROSITE-ProRule" id="PRU01266"/>
    </source>
</evidence>
<gene>
    <name evidence="1" type="primary">bioB</name>
    <name type="ordered locus">Bind_0535</name>
</gene>
<organism>
    <name type="scientific">Beijerinckia indica subsp. indica (strain ATCC 9039 / DSM 1715 / NCIMB 8712)</name>
    <dbReference type="NCBI Taxonomy" id="395963"/>
    <lineage>
        <taxon>Bacteria</taxon>
        <taxon>Pseudomonadati</taxon>
        <taxon>Pseudomonadota</taxon>
        <taxon>Alphaproteobacteria</taxon>
        <taxon>Hyphomicrobiales</taxon>
        <taxon>Beijerinckiaceae</taxon>
        <taxon>Beijerinckia</taxon>
    </lineage>
</organism>
<proteinExistence type="inferred from homology"/>
<sequence>MNAPFVVSPVRHDWSRHEIKALYDLPLLELIARASQIHALYHDPNDLQKASLLSIKTGGCSEDCGYCSQSARRDEVHLDRVEMMSPSDVLAVAAQARDNGADRFCMGAAWRQVRDGAAFDAVLEMVEGVRALGMEACVTLGMLNQSQAQRLKQAGLTAYNHNLDTSPEFYPQIVTTHTYDERLATLEAVRGEGIALCCGGIIGMGETVEDRVALLAILAGFDPHPESVPINALVPVAGTPLGDRQKLDPLEIVRMIATARLVMPDSRIRLSAGRSSLSREAQILCMVAGANSIFSGNVLLTTPNASLDADEALMEALAPR</sequence>